<feature type="chain" id="PRO_0000404502" description="Flavin-dependent monooxygenase, oxygenase subunit HsaA">
    <location>
        <begin position="1"/>
        <end position="382"/>
    </location>
</feature>
<feature type="binding site" evidence="1">
    <location>
        <position position="72"/>
    </location>
    <ligand>
        <name>FMN</name>
        <dbReference type="ChEBI" id="CHEBI:58210"/>
    </ligand>
</feature>
<feature type="binding site" evidence="1">
    <location>
        <begin position="106"/>
        <end position="108"/>
    </location>
    <ligand>
        <name>FMN</name>
        <dbReference type="ChEBI" id="CHEBI:58210"/>
    </ligand>
</feature>
<feature type="binding site" evidence="1">
    <location>
        <begin position="129"/>
        <end position="131"/>
    </location>
    <ligand>
        <name>FMN</name>
        <dbReference type="ChEBI" id="CHEBI:58210"/>
    </ligand>
</feature>
<feature type="binding site" evidence="1">
    <location>
        <position position="251"/>
    </location>
    <ligand>
        <name>FMN</name>
        <dbReference type="ChEBI" id="CHEBI:58210"/>
    </ligand>
</feature>
<feature type="binding site" evidence="1">
    <location>
        <begin position="334"/>
        <end position="335"/>
    </location>
    <ligand>
        <name>FMN</name>
        <dbReference type="ChEBI" id="CHEBI:58210"/>
    </ligand>
</feature>
<feature type="binding site" evidence="1">
    <location>
        <begin position="356"/>
        <end position="357"/>
    </location>
    <ligand>
        <name>FMN</name>
        <dbReference type="ChEBI" id="CHEBI:58210"/>
    </ligand>
</feature>
<feature type="helix" evidence="5">
    <location>
        <begin position="1"/>
        <end position="13"/>
    </location>
</feature>
<feature type="helix" evidence="5">
    <location>
        <begin position="15"/>
        <end position="21"/>
    </location>
</feature>
<feature type="helix" evidence="5">
    <location>
        <begin position="26"/>
        <end position="35"/>
    </location>
</feature>
<feature type="helix" evidence="5">
    <location>
        <begin position="37"/>
        <end position="39"/>
    </location>
</feature>
<feature type="helix" evidence="5">
    <location>
        <begin position="44"/>
        <end position="46"/>
    </location>
</feature>
<feature type="helix" evidence="5">
    <location>
        <begin position="53"/>
        <end position="64"/>
    </location>
</feature>
<feature type="helix" evidence="5">
    <location>
        <begin position="68"/>
        <end position="84"/>
    </location>
</feature>
<feature type="helix" evidence="5">
    <location>
        <begin position="89"/>
        <end position="96"/>
    </location>
</feature>
<feature type="strand" evidence="5">
    <location>
        <begin position="104"/>
        <end position="107"/>
    </location>
</feature>
<feature type="strand" evidence="5">
    <location>
        <begin position="111"/>
        <end position="117"/>
    </location>
</feature>
<feature type="strand" evidence="5">
    <location>
        <begin position="120"/>
        <end position="130"/>
    </location>
</feature>
<feature type="helix" evidence="5">
    <location>
        <begin position="133"/>
        <end position="135"/>
    </location>
</feature>
<feature type="strand" evidence="5">
    <location>
        <begin position="137"/>
        <end position="147"/>
    </location>
</feature>
<feature type="strand" evidence="5">
    <location>
        <begin position="150"/>
        <end position="160"/>
    </location>
</feature>
<feature type="helix" evidence="5">
    <location>
        <begin position="161"/>
        <end position="163"/>
    </location>
</feature>
<feature type="strand" evidence="5">
    <location>
        <begin position="165"/>
        <end position="167"/>
    </location>
</feature>
<feature type="strand" evidence="5">
    <location>
        <begin position="172"/>
        <end position="174"/>
    </location>
</feature>
<feature type="helix" evidence="5">
    <location>
        <begin position="176"/>
        <end position="178"/>
    </location>
</feature>
<feature type="strand" evidence="5">
    <location>
        <begin position="181"/>
        <end position="191"/>
    </location>
</feature>
<feature type="helix" evidence="5">
    <location>
        <begin position="192"/>
        <end position="194"/>
    </location>
</feature>
<feature type="strand" evidence="5">
    <location>
        <begin position="195"/>
        <end position="197"/>
    </location>
</feature>
<feature type="helix" evidence="5">
    <location>
        <begin position="198"/>
        <end position="202"/>
    </location>
</feature>
<feature type="helix" evidence="5">
    <location>
        <begin position="207"/>
        <end position="209"/>
    </location>
</feature>
<feature type="helix" evidence="5">
    <location>
        <begin position="215"/>
        <end position="218"/>
    </location>
</feature>
<feature type="helix" evidence="5">
    <location>
        <begin position="221"/>
        <end position="254"/>
    </location>
</feature>
<feature type="helix" evidence="5">
    <location>
        <begin position="260"/>
        <end position="262"/>
    </location>
</feature>
<feature type="helix" evidence="5">
    <location>
        <begin position="265"/>
        <end position="297"/>
    </location>
</feature>
<feature type="helix" evidence="5">
    <location>
        <begin position="304"/>
        <end position="332"/>
    </location>
</feature>
<feature type="helix" evidence="5">
    <location>
        <begin position="333"/>
        <end position="337"/>
    </location>
</feature>
<feature type="helix" evidence="5">
    <location>
        <begin position="342"/>
        <end position="353"/>
    </location>
</feature>
<feature type="helix" evidence="5">
    <location>
        <begin position="357"/>
        <end position="359"/>
    </location>
</feature>
<feature type="helix" evidence="5">
    <location>
        <begin position="361"/>
        <end position="372"/>
    </location>
</feature>
<reference key="1">
    <citation type="journal article" date="2006" name="Proc. Natl. Acad. Sci. U.S.A.">
        <title>The complete genome of Rhodococcus sp. RHA1 provides insights into a catabolic powerhouse.</title>
        <authorList>
            <person name="McLeod M.P."/>
            <person name="Warren R.L."/>
            <person name="Hsiao W.W.L."/>
            <person name="Araki N."/>
            <person name="Myhre M."/>
            <person name="Fernandes C."/>
            <person name="Miyazawa D."/>
            <person name="Wong W."/>
            <person name="Lillquist A.L."/>
            <person name="Wang D."/>
            <person name="Dosanjh M."/>
            <person name="Hara H."/>
            <person name="Petrescu A."/>
            <person name="Morin R.D."/>
            <person name="Yang G."/>
            <person name="Stott J.M."/>
            <person name="Schein J.E."/>
            <person name="Shin H."/>
            <person name="Smailus D."/>
            <person name="Siddiqui A.S."/>
            <person name="Marra M.A."/>
            <person name="Jones S.J.M."/>
            <person name="Holt R."/>
            <person name="Brinkman F.S.L."/>
            <person name="Miyauchi K."/>
            <person name="Fukuda M."/>
            <person name="Davies J.E."/>
            <person name="Mohn W.W."/>
            <person name="Eltis L.D."/>
        </authorList>
    </citation>
    <scope>NUCLEOTIDE SEQUENCE [LARGE SCALE GENOMIC DNA]</scope>
    <source>
        <strain>RHA1</strain>
    </source>
</reference>
<reference key="2">
    <citation type="journal article" date="2007" name="Proc. Natl. Acad. Sci. U.S.A.">
        <title>A gene cluster encoding cholesterol catabolism in a soil actinomycete provides insight into Mycobacterium tuberculosis survival in macrophages.</title>
        <authorList>
            <person name="Van der Geize R."/>
            <person name="Yam K."/>
            <person name="Heuser T."/>
            <person name="Wilbrink M.H."/>
            <person name="Hara H."/>
            <person name="Anderton M.C."/>
            <person name="Sim E."/>
            <person name="Dijkhuizen L."/>
            <person name="Davies J.E."/>
            <person name="Mohn W.W."/>
            <person name="Eltis L.D."/>
        </authorList>
    </citation>
    <scope>FUNCTION IN CHOLESTEROL DEGRADATION</scope>
    <source>
        <strain>RHA1</strain>
    </source>
</reference>
<reference key="3">
    <citation type="submission" date="2009-02" db="PDB data bank">
        <title>Crystal structure of 3-hsa hydroxylase, oxygenase from Rhodococcus sp. RHA1.</title>
        <authorList>
            <consortium name="Midwest center for structural genomics (MCSG)"/>
        </authorList>
    </citation>
    <scope>X-RAY CRYSTALLOGRAPHY (1.65 ANGSTROMS)</scope>
    <scope>SUBUNIT</scope>
</reference>
<evidence type="ECO:0000250" key="1"/>
<evidence type="ECO:0000269" key="2">
    <source>
    </source>
</evidence>
<evidence type="ECO:0000269" key="3">
    <source ref="3"/>
</evidence>
<evidence type="ECO:0000305" key="4"/>
<evidence type="ECO:0007829" key="5">
    <source>
        <dbReference type="PDB" id="2RFQ"/>
    </source>
</evidence>
<keyword id="KW-0002">3D-structure</keyword>
<keyword id="KW-0058">Aromatic hydrocarbons catabolism</keyword>
<keyword id="KW-0285">Flavoprotein</keyword>
<keyword id="KW-0288">FMN</keyword>
<keyword id="KW-0442">Lipid degradation</keyword>
<keyword id="KW-0443">Lipid metabolism</keyword>
<keyword id="KW-0503">Monooxygenase</keyword>
<keyword id="KW-0560">Oxidoreductase</keyword>
<keyword id="KW-0753">Steroid metabolism</keyword>
<organism>
    <name type="scientific">Rhodococcus jostii (strain RHA1)</name>
    <dbReference type="NCBI Taxonomy" id="101510"/>
    <lineage>
        <taxon>Bacteria</taxon>
        <taxon>Bacillati</taxon>
        <taxon>Actinomycetota</taxon>
        <taxon>Actinomycetes</taxon>
        <taxon>Mycobacteriales</taxon>
        <taxon>Nocardiaceae</taxon>
        <taxon>Rhodococcus</taxon>
    </lineage>
</organism>
<accession>Q0S811</accession>
<dbReference type="EC" id="1.14.14.12"/>
<dbReference type="EMBL" id="CP000431">
    <property type="protein sequence ID" value="ABG96325.1"/>
    <property type="molecule type" value="Genomic_DNA"/>
</dbReference>
<dbReference type="PDB" id="2RFQ">
    <property type="method" value="X-ray"/>
    <property type="resolution" value="1.65 A"/>
    <property type="chains" value="A/B/C/D=1-382"/>
</dbReference>
<dbReference type="PDBsum" id="2RFQ"/>
<dbReference type="SMR" id="Q0S811"/>
<dbReference type="KEGG" id="rha:RHA1_ro04539"/>
<dbReference type="eggNOG" id="COG1960">
    <property type="taxonomic scope" value="Bacteria"/>
</dbReference>
<dbReference type="HOGENOM" id="CLU_018204_2_0_11"/>
<dbReference type="BioCyc" id="MetaCyc:MONOMER-16961"/>
<dbReference type="UniPathway" id="UPA00062"/>
<dbReference type="EvolutionaryTrace" id="Q0S811"/>
<dbReference type="Proteomes" id="UP000008710">
    <property type="component" value="Chromosome"/>
</dbReference>
<dbReference type="GO" id="GO:0005737">
    <property type="term" value="C:cytoplasm"/>
    <property type="evidence" value="ECO:0007669"/>
    <property type="project" value="TreeGrafter"/>
</dbReference>
<dbReference type="GO" id="GO:0036383">
    <property type="term" value="F:3-hydroxy-9,10-secoandrosta-1,3,5(10)-triene-9,17-dione monooxygenase activity"/>
    <property type="evidence" value="ECO:0007669"/>
    <property type="project" value="UniProtKB-EC"/>
</dbReference>
<dbReference type="GO" id="GO:0003995">
    <property type="term" value="F:acyl-CoA dehydrogenase activity"/>
    <property type="evidence" value="ECO:0007669"/>
    <property type="project" value="TreeGrafter"/>
</dbReference>
<dbReference type="GO" id="GO:0050660">
    <property type="term" value="F:flavin adenine dinucleotide binding"/>
    <property type="evidence" value="ECO:0007669"/>
    <property type="project" value="InterPro"/>
</dbReference>
<dbReference type="GO" id="GO:0033539">
    <property type="term" value="P:fatty acid beta-oxidation using acyl-CoA dehydrogenase"/>
    <property type="evidence" value="ECO:0007669"/>
    <property type="project" value="TreeGrafter"/>
</dbReference>
<dbReference type="GO" id="GO:0006694">
    <property type="term" value="P:steroid biosynthetic process"/>
    <property type="evidence" value="ECO:0007669"/>
    <property type="project" value="UniProtKB-UniPathway"/>
</dbReference>
<dbReference type="CDD" id="cd01159">
    <property type="entry name" value="NcnH"/>
    <property type="match status" value="1"/>
</dbReference>
<dbReference type="FunFam" id="2.40.110.10:FF:000021">
    <property type="entry name" value="Flavin-dependent monooxygenase, oxygenase subunit"/>
    <property type="match status" value="1"/>
</dbReference>
<dbReference type="Gene3D" id="1.10.540.10">
    <property type="entry name" value="Acyl-CoA dehydrogenase/oxidase, N-terminal domain"/>
    <property type="match status" value="1"/>
</dbReference>
<dbReference type="Gene3D" id="2.40.110.10">
    <property type="entry name" value="Butyryl-CoA Dehydrogenase, subunit A, domain 2"/>
    <property type="match status" value="1"/>
</dbReference>
<dbReference type="Gene3D" id="1.20.140.10">
    <property type="entry name" value="Butyryl-CoA Dehydrogenase, subunit A, domain 3"/>
    <property type="match status" value="1"/>
</dbReference>
<dbReference type="InterPro" id="IPR050741">
    <property type="entry name" value="Acyl-CoA_dehydrogenase"/>
</dbReference>
<dbReference type="InterPro" id="IPR013107">
    <property type="entry name" value="Acyl-CoA_DH_C"/>
</dbReference>
<dbReference type="InterPro" id="IPR046373">
    <property type="entry name" value="Acyl-CoA_Oxase/DH_mid-dom_sf"/>
</dbReference>
<dbReference type="InterPro" id="IPR036250">
    <property type="entry name" value="AcylCo_DH-like_C"/>
</dbReference>
<dbReference type="InterPro" id="IPR013786">
    <property type="entry name" value="AcylCoA_DH/ox_N"/>
</dbReference>
<dbReference type="InterPro" id="IPR037069">
    <property type="entry name" value="AcylCoA_DH/ox_N_sf"/>
</dbReference>
<dbReference type="InterPro" id="IPR009100">
    <property type="entry name" value="AcylCoA_DH/oxidase_NM_dom_sf"/>
</dbReference>
<dbReference type="InterPro" id="IPR054617">
    <property type="entry name" value="HsaA"/>
</dbReference>
<dbReference type="NCBIfam" id="NF045629">
    <property type="entry name" value="monooxsub_HsaA"/>
    <property type="match status" value="1"/>
</dbReference>
<dbReference type="PANTHER" id="PTHR48083:SF19">
    <property type="entry name" value="FLAVIN-DEPENDENT MONOOXYGENASE, OXYGENASE SUBUNIT HSAA"/>
    <property type="match status" value="1"/>
</dbReference>
<dbReference type="PANTHER" id="PTHR48083">
    <property type="entry name" value="MEDIUM-CHAIN SPECIFIC ACYL-COA DEHYDROGENASE, MITOCHONDRIAL-RELATED"/>
    <property type="match status" value="1"/>
</dbReference>
<dbReference type="Pfam" id="PF08028">
    <property type="entry name" value="Acyl-CoA_dh_2"/>
    <property type="match status" value="1"/>
</dbReference>
<dbReference type="Pfam" id="PF02771">
    <property type="entry name" value="Acyl-CoA_dh_N"/>
    <property type="match status" value="1"/>
</dbReference>
<dbReference type="PIRSF" id="PIRSF016578">
    <property type="entry name" value="HsaA"/>
    <property type="match status" value="1"/>
</dbReference>
<dbReference type="SUPFAM" id="SSF47203">
    <property type="entry name" value="Acyl-CoA dehydrogenase C-terminal domain-like"/>
    <property type="match status" value="1"/>
</dbReference>
<dbReference type="SUPFAM" id="SSF56645">
    <property type="entry name" value="Acyl-CoA dehydrogenase NM domain-like"/>
    <property type="match status" value="1"/>
</dbReference>
<name>HSAA_RHOJR</name>
<protein>
    <recommendedName>
        <fullName>Flavin-dependent monooxygenase, oxygenase subunit HsaA</fullName>
        <ecNumber>1.14.14.12</ecNumber>
    </recommendedName>
    <alternativeName>
        <fullName>3-hydroxy-9,10-secoandrosta-1,3,5(10)-triene-9,17-dione 4-hydroxylase, oxygenase subunit</fullName>
    </alternativeName>
    <alternativeName>
        <fullName>3-hydroxy-9,10-secoandrosta-1,3,5(10)-triene-9,17-dione monooxygenase</fullName>
    </alternativeName>
</protein>
<sequence>MQRLDALLPTLRERAQETEDLRRIPDDSMKALQETGFFRLLQPEQWGGYQADPVLFYSAVRKIASACGSTGWVSSIIGVHNWHLALFSQQAQEDVWGNDTDVRISSSYAPMGAGQVVDGGYTVNGAWAWSSGCDHASWAVLGGPVIKDGRPVDFVSFLIPREDYRIDDVWNVVGLRGTGSNTVVVEDVFVPTHRVLSFKAMSNLTAPGLERNTAPVYKMPWGTIHPTTISAPIVGMAYGAYDAHVEHQGKRVRAAFAGEKAKDDPFAKVRIAEASSDIDAAWRQLSGNVADEYALLVAGEEVPFELRLRARRDQVRATGRAISSIDKLFESSGATALANGTPLQRFWRDAHAGRVHAANDPERAYVMYGTGEFGLPITDTMV</sequence>
<gene>
    <name type="primary">hsaA</name>
    <name type="ordered locus">RHA1_ro04539</name>
</gene>
<comment type="function">
    <text evidence="2">Catalyzes the o-hydroxylation of 3-hydroxy-9,10-secoandrosta-1,3,5(10)-triene-9,17-dione (3-HSA) to 3,4-dihydroxy-9,10-secoandrosta-1,3,5(10)-triene-9,17-dione (3,4-DHSA) in the catabolism of cholesterol.</text>
</comment>
<comment type="catalytic activity">
    <reaction>
        <text>3-hydroxy-9,10-secoandrosta-1,3,5(10)-triene-9,17-dione + FMNH2 + O2 = 3,4-dihydroxy-9,10-secoandrosta-1,3,5(10)-triene-9,17-dione + FMN + H2O + H(+)</text>
        <dbReference type="Rhea" id="RHEA:31731"/>
        <dbReference type="ChEBI" id="CHEBI:15377"/>
        <dbReference type="ChEBI" id="CHEBI:15378"/>
        <dbReference type="ChEBI" id="CHEBI:15379"/>
        <dbReference type="ChEBI" id="CHEBI:15896"/>
        <dbReference type="ChEBI" id="CHEBI:57618"/>
        <dbReference type="ChEBI" id="CHEBI:58210"/>
        <dbReference type="ChEBI" id="CHEBI:63245"/>
        <dbReference type="EC" id="1.14.14.12"/>
    </reaction>
</comment>
<comment type="pathway">
    <text>Lipid metabolism; steroid biosynthesis.</text>
</comment>
<comment type="subunit">
    <text evidence="3">Homotetramer. HsaAB monooxygenase consists of an oxygenase component HsaA and a reductase component HsaB.</text>
</comment>
<comment type="similarity">
    <text evidence="4">Belongs to the HpaH/HsaA monooxygenase family.</text>
</comment>
<proteinExistence type="evidence at protein level"/>